<evidence type="ECO:0000250" key="1">
    <source>
        <dbReference type="UniProtKB" id="P43686"/>
    </source>
</evidence>
<evidence type="ECO:0000255" key="2"/>
<evidence type="ECO:0000305" key="3"/>
<evidence type="ECO:0007829" key="4">
    <source>
        <dbReference type="PDB" id="2DWZ"/>
    </source>
</evidence>
<gene>
    <name type="primary">Psmc4</name>
    <name type="synonym">Tbp7</name>
</gene>
<name>PRS6B_RAT</name>
<comment type="function">
    <text evidence="1">Component of the 26S proteasome, a multiprotein complex involved in the ATP-dependent degradation of ubiquitinated proteins. This complex plays a key role in the maintenance of protein homeostasis by removing misfolded or damaged proteins, which could impair cellular functions, and by removing proteins whose functions are no longer required. Therefore, the proteasome participates in numerous cellular processes, including cell cycle progression, apoptosis, or DNA damage repair. PSMC4 belongs to the heterohexameric ring of AAA (ATPases associated with diverse cellular activities) proteins that unfolds ubiquitinated target proteins that are concurrently translocated into a proteolytic chamber and degraded into peptides.</text>
</comment>
<comment type="subunit">
    <text evidence="1">Component of the 19S proteasome regulatory particle complex. The 26S proteasome consists of a 20S core particle (CP) and two 19S regulatory subunits (RP). The regulatory particle is made of a lid composed of 9 subunits, a base containing 6 ATPases including PSMC4 and few additional components. Interacts with NR1I3. Interacts with PAAF1. Interacts with TRIM5. Interacts with ZFAND1 (By similarity).</text>
</comment>
<comment type="subcellular location">
    <subcellularLocation>
        <location evidence="1">Cytoplasm</location>
    </subcellularLocation>
    <subcellularLocation>
        <location evidence="1">Nucleus</location>
    </subcellularLocation>
</comment>
<comment type="similarity">
    <text evidence="3">Belongs to the AAA ATPase family.</text>
</comment>
<protein>
    <recommendedName>
        <fullName>26S proteasome regulatory subunit 6B</fullName>
    </recommendedName>
    <alternativeName>
        <fullName>26S proteasome AAA-ATPase subunit RPT3</fullName>
    </alternativeName>
    <alternativeName>
        <fullName>Proteasome 26S subunit ATPase 4</fullName>
        <shortName>S6 ATPase</shortName>
    </alternativeName>
    <alternativeName>
        <fullName>Tat-binding protein 7</fullName>
        <shortName>TBP-7</shortName>
    </alternativeName>
</protein>
<organism>
    <name type="scientific">Rattus norvegicus</name>
    <name type="common">Rat</name>
    <dbReference type="NCBI Taxonomy" id="10116"/>
    <lineage>
        <taxon>Eukaryota</taxon>
        <taxon>Metazoa</taxon>
        <taxon>Chordata</taxon>
        <taxon>Craniata</taxon>
        <taxon>Vertebrata</taxon>
        <taxon>Euteleostomi</taxon>
        <taxon>Mammalia</taxon>
        <taxon>Eutheria</taxon>
        <taxon>Euarchontoglires</taxon>
        <taxon>Glires</taxon>
        <taxon>Rodentia</taxon>
        <taxon>Myomorpha</taxon>
        <taxon>Muroidea</taxon>
        <taxon>Muridae</taxon>
        <taxon>Murinae</taxon>
        <taxon>Rattus</taxon>
    </lineage>
</organism>
<accession>Q63570</accession>
<dbReference type="EMBL" id="D50695">
    <property type="protein sequence ID" value="BAA09340.1"/>
    <property type="molecule type" value="mRNA"/>
</dbReference>
<dbReference type="EMBL" id="BC063145">
    <property type="protein sequence ID" value="AAH63145.1"/>
    <property type="molecule type" value="mRNA"/>
</dbReference>
<dbReference type="RefSeq" id="NP_476463.1">
    <property type="nucleotide sequence ID" value="NM_057122.2"/>
</dbReference>
<dbReference type="PDB" id="2DWZ">
    <property type="method" value="X-ray"/>
    <property type="resolution" value="2.40 A"/>
    <property type="chains" value="B/D=337-418"/>
</dbReference>
<dbReference type="PDB" id="6EPC">
    <property type="method" value="EM"/>
    <property type="resolution" value="12.30 A"/>
    <property type="chains" value="K=1-418"/>
</dbReference>
<dbReference type="PDB" id="6EPD">
    <property type="method" value="EM"/>
    <property type="resolution" value="15.40 A"/>
    <property type="chains" value="K=1-418"/>
</dbReference>
<dbReference type="PDB" id="6EPE">
    <property type="method" value="EM"/>
    <property type="resolution" value="12.80 A"/>
    <property type="chains" value="K=1-418"/>
</dbReference>
<dbReference type="PDB" id="6EPF">
    <property type="method" value="EM"/>
    <property type="resolution" value="11.80 A"/>
    <property type="chains" value="K=1-418"/>
</dbReference>
<dbReference type="PDBsum" id="2DWZ"/>
<dbReference type="PDBsum" id="6EPC"/>
<dbReference type="PDBsum" id="6EPD"/>
<dbReference type="PDBsum" id="6EPE"/>
<dbReference type="PDBsum" id="6EPF"/>
<dbReference type="EMDB" id="EMD-3913"/>
<dbReference type="EMDB" id="EMD-3914"/>
<dbReference type="EMDB" id="EMD-3915"/>
<dbReference type="EMDB" id="EMD-3916"/>
<dbReference type="SMR" id="Q63570"/>
<dbReference type="BioGRID" id="250709">
    <property type="interactions" value="4"/>
</dbReference>
<dbReference type="ComplexPortal" id="CPX-8962">
    <property type="entry name" value="19S proteasome regulatory complex"/>
</dbReference>
<dbReference type="ComplexPortal" id="CPX-8965">
    <property type="entry name" value="30S proteasome complex"/>
</dbReference>
<dbReference type="FunCoup" id="Q63570">
    <property type="interactions" value="3863"/>
</dbReference>
<dbReference type="IntAct" id="Q63570">
    <property type="interactions" value="5"/>
</dbReference>
<dbReference type="STRING" id="10116.ENSRNOP00000025819"/>
<dbReference type="iPTMnet" id="Q63570"/>
<dbReference type="PhosphoSitePlus" id="Q63570"/>
<dbReference type="jPOST" id="Q63570"/>
<dbReference type="PaxDb" id="10116-ENSRNOP00000025819"/>
<dbReference type="Ensembl" id="ENSRNOT00000025819.6">
    <property type="protein sequence ID" value="ENSRNOP00000025819.3"/>
    <property type="gene ID" value="ENSRNOG00000018994.6"/>
</dbReference>
<dbReference type="GeneID" id="117262"/>
<dbReference type="KEGG" id="rno:117262"/>
<dbReference type="UCSC" id="RGD:621102">
    <property type="organism name" value="rat"/>
</dbReference>
<dbReference type="AGR" id="RGD:621102"/>
<dbReference type="CTD" id="5704"/>
<dbReference type="RGD" id="621102">
    <property type="gene designation" value="Psmc4"/>
</dbReference>
<dbReference type="eggNOG" id="KOG0727">
    <property type="taxonomic scope" value="Eukaryota"/>
</dbReference>
<dbReference type="GeneTree" id="ENSGT01020000230346"/>
<dbReference type="HOGENOM" id="CLU_000688_2_0_1"/>
<dbReference type="InParanoid" id="Q63570"/>
<dbReference type="OMA" id="QDIGGMD"/>
<dbReference type="OrthoDB" id="10255768at2759"/>
<dbReference type="PhylomeDB" id="Q63570"/>
<dbReference type="TreeFam" id="TF106227"/>
<dbReference type="Reactome" id="R-RNO-1169091">
    <property type="pathway name" value="Activation of NF-kappaB in B cells"/>
</dbReference>
<dbReference type="Reactome" id="R-RNO-1234176">
    <property type="pathway name" value="Oxygen-dependent proline hydroxylation of Hypoxia-inducible Factor Alpha"/>
</dbReference>
<dbReference type="Reactome" id="R-RNO-1236978">
    <property type="pathway name" value="Cross-presentation of soluble exogenous antigens (endosomes)"/>
</dbReference>
<dbReference type="Reactome" id="R-RNO-174084">
    <property type="pathway name" value="Autodegradation of Cdh1 by Cdh1:APC/C"/>
</dbReference>
<dbReference type="Reactome" id="R-RNO-174113">
    <property type="pathway name" value="SCF-beta-TrCP mediated degradation of Emi1"/>
</dbReference>
<dbReference type="Reactome" id="R-RNO-174154">
    <property type="pathway name" value="APC/C:Cdc20 mediated degradation of Securin"/>
</dbReference>
<dbReference type="Reactome" id="R-RNO-174178">
    <property type="pathway name" value="APC/C:Cdh1 mediated degradation of Cdc20 and other APC/C:Cdh1 targeted proteins in late mitosis/early G1"/>
</dbReference>
<dbReference type="Reactome" id="R-RNO-174184">
    <property type="pathway name" value="Cdc20:Phospho-APC/C mediated degradation of Cyclin A"/>
</dbReference>
<dbReference type="Reactome" id="R-RNO-187577">
    <property type="pathway name" value="SCF(Skp2)-mediated degradation of p27/p21"/>
</dbReference>
<dbReference type="Reactome" id="R-RNO-195253">
    <property type="pathway name" value="Degradation of beta-catenin by the destruction complex"/>
</dbReference>
<dbReference type="Reactome" id="R-RNO-2467813">
    <property type="pathway name" value="Separation of Sister Chromatids"/>
</dbReference>
<dbReference type="Reactome" id="R-RNO-349425">
    <property type="pathway name" value="Autodegradation of the E3 ubiquitin ligase COP1"/>
</dbReference>
<dbReference type="Reactome" id="R-RNO-350562">
    <property type="pathway name" value="Regulation of ornithine decarboxylase (ODC)"/>
</dbReference>
<dbReference type="Reactome" id="R-RNO-382556">
    <property type="pathway name" value="ABC-family proteins mediated transport"/>
</dbReference>
<dbReference type="Reactome" id="R-RNO-450408">
    <property type="pathway name" value="AUF1 (hnRNP D0) binds and destabilizes mRNA"/>
</dbReference>
<dbReference type="Reactome" id="R-RNO-4608870">
    <property type="pathway name" value="Asymmetric localization of PCP proteins"/>
</dbReference>
<dbReference type="Reactome" id="R-RNO-4641257">
    <property type="pathway name" value="Degradation of AXIN"/>
</dbReference>
<dbReference type="Reactome" id="R-RNO-4641258">
    <property type="pathway name" value="Degradation of DVL"/>
</dbReference>
<dbReference type="Reactome" id="R-RNO-5358346">
    <property type="pathway name" value="Hedgehog ligand biogenesis"/>
</dbReference>
<dbReference type="Reactome" id="R-RNO-5607761">
    <property type="pathway name" value="Dectin-1 mediated noncanonical NF-kB signaling"/>
</dbReference>
<dbReference type="Reactome" id="R-RNO-5610780">
    <property type="pathway name" value="Degradation of GLI1 by the proteasome"/>
</dbReference>
<dbReference type="Reactome" id="R-RNO-5610785">
    <property type="pathway name" value="GLI3 is processed to GLI3R by the proteasome"/>
</dbReference>
<dbReference type="Reactome" id="R-RNO-5632684">
    <property type="pathway name" value="Hedgehog 'on' state"/>
</dbReference>
<dbReference type="Reactome" id="R-RNO-5658442">
    <property type="pathway name" value="Regulation of RAS by GAPs"/>
</dbReference>
<dbReference type="Reactome" id="R-RNO-5668541">
    <property type="pathway name" value="TNFR2 non-canonical NF-kB pathway"/>
</dbReference>
<dbReference type="Reactome" id="R-RNO-5676590">
    <property type="pathway name" value="NIK--&gt;noncanonical NF-kB signaling"/>
</dbReference>
<dbReference type="Reactome" id="R-RNO-5687128">
    <property type="pathway name" value="MAPK6/MAPK4 signaling"/>
</dbReference>
<dbReference type="Reactome" id="R-RNO-5689603">
    <property type="pathway name" value="UCH proteinases"/>
</dbReference>
<dbReference type="Reactome" id="R-RNO-5689880">
    <property type="pathway name" value="Ub-specific processing proteases"/>
</dbReference>
<dbReference type="Reactome" id="R-RNO-68867">
    <property type="pathway name" value="Assembly of the pre-replicative complex"/>
</dbReference>
<dbReference type="Reactome" id="R-RNO-68949">
    <property type="pathway name" value="Orc1 removal from chromatin"/>
</dbReference>
<dbReference type="Reactome" id="R-RNO-69017">
    <property type="pathway name" value="CDK-mediated phosphorylation and removal of Cdc6"/>
</dbReference>
<dbReference type="Reactome" id="R-RNO-69481">
    <property type="pathway name" value="G2/M Checkpoints"/>
</dbReference>
<dbReference type="Reactome" id="R-RNO-69601">
    <property type="pathway name" value="Ubiquitin Mediated Degradation of Phosphorylated Cdc25A"/>
</dbReference>
<dbReference type="Reactome" id="R-RNO-75815">
    <property type="pathway name" value="Ubiquitin-dependent degradation of Cyclin D"/>
</dbReference>
<dbReference type="Reactome" id="R-RNO-8852276">
    <property type="pathway name" value="The role of GTSE1 in G2/M progression after G2 checkpoint"/>
</dbReference>
<dbReference type="Reactome" id="R-RNO-8854050">
    <property type="pathway name" value="FBXL7 down-regulates AURKA during mitotic entry and in early mitosis"/>
</dbReference>
<dbReference type="Reactome" id="R-RNO-8939236">
    <property type="pathway name" value="RUNX1 regulates transcription of genes involved in differentiation of HSCs"/>
</dbReference>
<dbReference type="Reactome" id="R-RNO-8941858">
    <property type="pathway name" value="Regulation of RUNX3 expression and activity"/>
</dbReference>
<dbReference type="Reactome" id="R-RNO-8948751">
    <property type="pathway name" value="Regulation of PTEN stability and activity"/>
</dbReference>
<dbReference type="Reactome" id="R-RNO-8951664">
    <property type="pathway name" value="Neddylation"/>
</dbReference>
<dbReference type="Reactome" id="R-RNO-9755511">
    <property type="pathway name" value="KEAP1-NFE2L2 pathway"/>
</dbReference>
<dbReference type="Reactome" id="R-RNO-9762114">
    <property type="pathway name" value="GSK3B and BTRC:CUL1-mediated-degradation of NFE2L2"/>
</dbReference>
<dbReference type="Reactome" id="R-RNO-983168">
    <property type="pathway name" value="Antigen processing: Ubiquitination &amp; Proteasome degradation"/>
</dbReference>
<dbReference type="Reactome" id="R-RNO-9907900">
    <property type="pathway name" value="Proteasome assembly"/>
</dbReference>
<dbReference type="EvolutionaryTrace" id="Q63570"/>
<dbReference type="PRO" id="PR:Q63570"/>
<dbReference type="Proteomes" id="UP000002494">
    <property type="component" value="Chromosome 1"/>
</dbReference>
<dbReference type="Bgee" id="ENSRNOG00000018994">
    <property type="expression patterns" value="Expressed in ovary and 20 other cell types or tissues"/>
</dbReference>
<dbReference type="GO" id="GO:0031597">
    <property type="term" value="C:cytosolic proteasome complex"/>
    <property type="evidence" value="ECO:0000314"/>
    <property type="project" value="RGD"/>
</dbReference>
<dbReference type="GO" id="GO:0016234">
    <property type="term" value="C:inclusion body"/>
    <property type="evidence" value="ECO:0000314"/>
    <property type="project" value="RGD"/>
</dbReference>
<dbReference type="GO" id="GO:0005634">
    <property type="term" value="C:nucleus"/>
    <property type="evidence" value="ECO:0007669"/>
    <property type="project" value="UniProtKB-SubCell"/>
</dbReference>
<dbReference type="GO" id="GO:0022624">
    <property type="term" value="C:proteasome accessory complex"/>
    <property type="evidence" value="ECO:0000250"/>
    <property type="project" value="UniProtKB"/>
</dbReference>
<dbReference type="GO" id="GO:0000502">
    <property type="term" value="C:proteasome complex"/>
    <property type="evidence" value="ECO:0000266"/>
    <property type="project" value="RGD"/>
</dbReference>
<dbReference type="GO" id="GO:0008540">
    <property type="term" value="C:proteasome regulatory particle, base subcomplex"/>
    <property type="evidence" value="ECO:0000318"/>
    <property type="project" value="GO_Central"/>
</dbReference>
<dbReference type="GO" id="GO:0005524">
    <property type="term" value="F:ATP binding"/>
    <property type="evidence" value="ECO:0007669"/>
    <property type="project" value="UniProtKB-KW"/>
</dbReference>
<dbReference type="GO" id="GO:0016887">
    <property type="term" value="F:ATP hydrolysis activity"/>
    <property type="evidence" value="ECO:0000304"/>
    <property type="project" value="RGD"/>
</dbReference>
<dbReference type="GO" id="GO:0036402">
    <property type="term" value="F:proteasome-activating activity"/>
    <property type="evidence" value="ECO:0000318"/>
    <property type="project" value="GO_Central"/>
</dbReference>
<dbReference type="GO" id="GO:0001824">
    <property type="term" value="P:blastocyst development"/>
    <property type="evidence" value="ECO:0000266"/>
    <property type="project" value="RGD"/>
</dbReference>
<dbReference type="GO" id="GO:0043161">
    <property type="term" value="P:proteasome-mediated ubiquitin-dependent protein catabolic process"/>
    <property type="evidence" value="ECO:0000318"/>
    <property type="project" value="GO_Central"/>
</dbReference>
<dbReference type="CDD" id="cd19502">
    <property type="entry name" value="RecA-like_PAN_like"/>
    <property type="match status" value="1"/>
</dbReference>
<dbReference type="FunFam" id="1.10.8.60:FF:000018">
    <property type="entry name" value="26S protease regulatory subunit 6B"/>
    <property type="match status" value="1"/>
</dbReference>
<dbReference type="FunFam" id="2.40.50.140:FF:000046">
    <property type="entry name" value="26S protease regulatory subunit 6B"/>
    <property type="match status" value="1"/>
</dbReference>
<dbReference type="FunFam" id="3.40.50.300:FF:000033">
    <property type="entry name" value="26S protease regulatory subunit 6B"/>
    <property type="match status" value="1"/>
</dbReference>
<dbReference type="Gene3D" id="1.10.8.60">
    <property type="match status" value="1"/>
</dbReference>
<dbReference type="Gene3D" id="2.40.50.140">
    <property type="entry name" value="Nucleic acid-binding proteins"/>
    <property type="match status" value="1"/>
</dbReference>
<dbReference type="Gene3D" id="3.40.50.300">
    <property type="entry name" value="P-loop containing nucleotide triphosphate hydrolases"/>
    <property type="match status" value="1"/>
</dbReference>
<dbReference type="InterPro" id="IPR050221">
    <property type="entry name" value="26S_Proteasome_ATPase"/>
</dbReference>
<dbReference type="InterPro" id="IPR003593">
    <property type="entry name" value="AAA+_ATPase"/>
</dbReference>
<dbReference type="InterPro" id="IPR041569">
    <property type="entry name" value="AAA_lid_3"/>
</dbReference>
<dbReference type="InterPro" id="IPR003959">
    <property type="entry name" value="ATPase_AAA_core"/>
</dbReference>
<dbReference type="InterPro" id="IPR003960">
    <property type="entry name" value="ATPase_AAA_CS"/>
</dbReference>
<dbReference type="InterPro" id="IPR012340">
    <property type="entry name" value="NA-bd_OB-fold"/>
</dbReference>
<dbReference type="InterPro" id="IPR027417">
    <property type="entry name" value="P-loop_NTPase"/>
</dbReference>
<dbReference type="InterPro" id="IPR032501">
    <property type="entry name" value="Prot_ATP_ID_OB_2nd"/>
</dbReference>
<dbReference type="PANTHER" id="PTHR23073">
    <property type="entry name" value="26S PROTEASOME REGULATORY SUBUNIT"/>
    <property type="match status" value="1"/>
</dbReference>
<dbReference type="Pfam" id="PF00004">
    <property type="entry name" value="AAA"/>
    <property type="match status" value="1"/>
</dbReference>
<dbReference type="Pfam" id="PF17862">
    <property type="entry name" value="AAA_lid_3"/>
    <property type="match status" value="1"/>
</dbReference>
<dbReference type="Pfam" id="PF16450">
    <property type="entry name" value="Prot_ATP_ID_OB_C"/>
    <property type="match status" value="1"/>
</dbReference>
<dbReference type="SMART" id="SM00382">
    <property type="entry name" value="AAA"/>
    <property type="match status" value="1"/>
</dbReference>
<dbReference type="SUPFAM" id="SSF52540">
    <property type="entry name" value="P-loop containing nucleoside triphosphate hydrolases"/>
    <property type="match status" value="1"/>
</dbReference>
<dbReference type="PROSITE" id="PS00674">
    <property type="entry name" value="AAA"/>
    <property type="match status" value="1"/>
</dbReference>
<feature type="chain" id="PRO_0000084688" description="26S proteasome regulatory subunit 6B">
    <location>
        <begin position="1"/>
        <end position="418"/>
    </location>
</feature>
<feature type="binding site" evidence="2">
    <location>
        <begin position="206"/>
        <end position="213"/>
    </location>
    <ligand>
        <name>ATP</name>
        <dbReference type="ChEBI" id="CHEBI:30616"/>
    </ligand>
</feature>
<feature type="modified residue" description="N-acetylmethionine" evidence="1">
    <location>
        <position position="1"/>
    </location>
</feature>
<feature type="modified residue" description="Phosphoserine" evidence="1">
    <location>
        <position position="21"/>
    </location>
</feature>
<feature type="modified residue" description="Phosphothreonine" evidence="1">
    <location>
        <position position="25"/>
    </location>
</feature>
<feature type="modified residue" description="Phosphoserine" evidence="1">
    <location>
        <position position="28"/>
    </location>
</feature>
<feature type="modified residue" description="N6-acetyllysine" evidence="1">
    <location>
        <position position="397"/>
    </location>
</feature>
<feature type="modified residue" description="N6-acetyllysine" evidence="1">
    <location>
        <position position="401"/>
    </location>
</feature>
<feature type="helix" evidence="4">
    <location>
        <begin position="338"/>
        <end position="349"/>
    </location>
</feature>
<feature type="helix" evidence="4">
    <location>
        <begin position="361"/>
        <end position="364"/>
    </location>
</feature>
<feature type="helix" evidence="4">
    <location>
        <begin position="372"/>
        <end position="387"/>
    </location>
</feature>
<feature type="turn" evidence="4">
    <location>
        <begin position="388"/>
        <end position="390"/>
    </location>
</feature>
<feature type="strand" evidence="4">
    <location>
        <begin position="392"/>
        <end position="394"/>
    </location>
</feature>
<feature type="helix" evidence="4">
    <location>
        <begin position="396"/>
        <end position="406"/>
    </location>
</feature>
<reference key="1">
    <citation type="journal article" date="1996" name="Biochem. Biophys. Res. Commun.">
        <title>Structures of the rat proteasomal ATPases: determination of highly conserved structural motifs and rules for their spacing.</title>
        <authorList>
            <person name="Makino Y."/>
            <person name="Yogosawa S."/>
            <person name="Kanemaki M."/>
            <person name="Yoshida T."/>
            <person name="Yamano K."/>
            <person name="Kishimoto T."/>
            <person name="Moncollin V."/>
            <person name="Egly J.-M."/>
            <person name="Muramatsu M."/>
            <person name="Tamura T."/>
        </authorList>
    </citation>
    <scope>NUCLEOTIDE SEQUENCE [MRNA]</scope>
    <source>
        <strain>Sprague-Dawley</strain>
        <tissue>Liver</tissue>
    </source>
</reference>
<reference key="2">
    <citation type="journal article" date="2004" name="Genome Res.">
        <title>The status, quality, and expansion of the NIH full-length cDNA project: the Mammalian Gene Collection (MGC).</title>
        <authorList>
            <consortium name="The MGC Project Team"/>
        </authorList>
    </citation>
    <scope>NUCLEOTIDE SEQUENCE [LARGE SCALE MRNA]</scope>
    <source>
        <tissue>Pituitary</tissue>
    </source>
</reference>
<reference key="3">
    <citation type="journal article" date="2007" name="Structure">
        <title>Structure of the oncoprotein gankyrin in complex with S6 ATPase of the 26S proteasome.</title>
        <authorList>
            <person name="Nakamura Y."/>
            <person name="Nakano K."/>
            <person name="Umehara T."/>
            <person name="Kimura M."/>
            <person name="Hayashizaki Y."/>
            <person name="Tanaka A."/>
            <person name="Horikoshi M."/>
            <person name="Padmanabhan B."/>
            <person name="Yokoyama S."/>
        </authorList>
    </citation>
    <scope>X-RAY CRYSTALLOGRAPHY (2.4 ANGSTROMS) OF 337-418 IN COMPLEX WITH MOUSE PSMD10</scope>
</reference>
<sequence>MEEIGILVEKIQDEIPALSVSRPQTGLSFLGPEPEDLEDLYSRYKKLQQELEFLEVQEEYIKDEQKNLKKEFLHAQEEVKRIQSIPLVIGQFLEAVDQNTAIVGSTTGSNYYVRILSTIDRELLKPNASVALHKHSNALVDVLPPEADSSIMMLTSDQKPDVMYADIGGMDIQKQEVREAVELPLTHFELYKQIGIDPPRGVLMYGPPGCGKTMLAKAVAHHTTAAFIRVVGSEFVQKYLGEGPRMVRDVFRLAKENAPAIIFIDEIDAIATKRFDAQTGADREVQRILLELLNQMDGFDQNVNVKVIMATNRADTLDPALLRPGRLDRKIEFPLPDRRQKRLIFSTITSKMNLSEEVDLEDYVARPDKISGADINSICQESGMLAVRENRYIVLAKDFEKAYKTVIKKDEQEHEFYK</sequence>
<keyword id="KW-0002">3D-structure</keyword>
<keyword id="KW-0007">Acetylation</keyword>
<keyword id="KW-0067">ATP-binding</keyword>
<keyword id="KW-0963">Cytoplasm</keyword>
<keyword id="KW-0547">Nucleotide-binding</keyword>
<keyword id="KW-0539">Nucleus</keyword>
<keyword id="KW-0597">Phosphoprotein</keyword>
<keyword id="KW-0647">Proteasome</keyword>
<keyword id="KW-1185">Reference proteome</keyword>
<proteinExistence type="evidence at protein level"/>